<comment type="function">
    <text evidence="5">Chanoclavine-I dehydrogenase; part of the gene cluster that mediates the biosynthesis of fungal ergot alkaloid (PubMed:22403186). DmaW catalyzes the first step of ergot alkaloid biosynthesis by condensing dimethylallyl diphosphate (DMAP) and tryptophan to form 4-dimethylallyl-L-tryptophan (PubMed:22403186). The second step is catalyzed by the methyltransferase easF that methylates 4-dimethylallyl-L-tryptophan in the presence of S-adenosyl-L-methionine, resulting in the formation of 4-dimethylallyl-L-abrine (PubMed:22403186). The catalase easC and the FAD-dependent oxidoreductase easE then transform 4-dimethylallyl-L-abrine to chanoclavine-I which is further oxidized by easD in the presence of NAD(+), resulting in the formation of chanoclavine-I aldehyde (PubMed:22403186). Chanoclavine-I aldehyde is the precursor of ergoamides and ergopeptines in Clavicipitaceae, and clavine-type alcaloids such as fumiclavine in Trichocomaceae (PubMed:22403186). However, the metabolites downstream of chanoclavine-I aldehyde in Arthrodermataceae have not been identified yet (PubMed:22403186).</text>
</comment>
<comment type="catalytic activity">
    <reaction evidence="1">
        <text>chanoclavine-I + NAD(+) = chanoclavine-I aldehyde + NADH + H(+)</text>
        <dbReference type="Rhea" id="RHEA:33891"/>
        <dbReference type="ChEBI" id="CHEBI:15378"/>
        <dbReference type="ChEBI" id="CHEBI:57540"/>
        <dbReference type="ChEBI" id="CHEBI:57945"/>
        <dbReference type="ChEBI" id="CHEBI:71487"/>
        <dbReference type="ChEBI" id="CHEBI:72949"/>
        <dbReference type="EC" id="1.1.1.332"/>
    </reaction>
</comment>
<comment type="pathway">
    <text evidence="8">Alkaloid biosynthesis; ergot alkaloid biosynthesis.</text>
</comment>
<comment type="subunit">
    <text evidence="1">Homotetramer.</text>
</comment>
<comment type="similarity">
    <text evidence="7">Belongs to the short-chain dehydrogenases/reductases (SDR) family.</text>
</comment>
<proteinExistence type="inferred from homology"/>
<protein>
    <recommendedName>
        <fullName evidence="6">Chanoclavine-I dehydrogenase easD</fullName>
        <shortName evidence="7">ChaDH</shortName>
        <ecNumber evidence="8">1.1.1.332</ecNumber>
    </recommendedName>
    <alternativeName>
        <fullName evidence="6">Ergot alkaloid synthesis protein D</fullName>
    </alternativeName>
</protein>
<gene>
    <name evidence="6" type="primary">easD</name>
    <name type="ORF">MCYG_06052</name>
</gene>
<sequence>MASVSSKIFAITGGASGIGAATCHLLARRGAAALCIGDLSNENMKQLEKSIREINPETKVHCTVLDVSSSSEVDKWVKDIISTFGDLHGAANVAGIAQGAGMRQIPTLLEEDDEQWKKVFQVNLDGILYATRAQVRAMKDSSSTSPGDRSIVNVASIASMAHMPDVFAYGTSKAGCAYFTTCVAQDVIPLGIRANTVSPGITRTPMLPRFVPNAKTQEEVEETYKKEGFSVIEADDVARTIVWLLSEDSRPVFGTNINVGACMP</sequence>
<accession>C5FTN0</accession>
<evidence type="ECO:0000250" key="1">
    <source>
        <dbReference type="UniProtKB" id="D4AK45"/>
    </source>
</evidence>
<evidence type="ECO:0000250" key="2">
    <source>
        <dbReference type="UniProtKB" id="L0E2Z4"/>
    </source>
</evidence>
<evidence type="ECO:0000250" key="3">
    <source>
        <dbReference type="UniProtKB" id="O93868"/>
    </source>
</evidence>
<evidence type="ECO:0000255" key="4"/>
<evidence type="ECO:0000269" key="5">
    <source>
    </source>
</evidence>
<evidence type="ECO:0000303" key="6">
    <source>
    </source>
</evidence>
<evidence type="ECO:0000305" key="7"/>
<evidence type="ECO:0000305" key="8">
    <source>
    </source>
</evidence>
<name>EASD_ARTOC</name>
<organism>
    <name type="scientific">Arthroderma otae (strain ATCC MYA-4605 / CBS 113480)</name>
    <name type="common">Microsporum canis</name>
    <dbReference type="NCBI Taxonomy" id="554155"/>
    <lineage>
        <taxon>Eukaryota</taxon>
        <taxon>Fungi</taxon>
        <taxon>Dikarya</taxon>
        <taxon>Ascomycota</taxon>
        <taxon>Pezizomycotina</taxon>
        <taxon>Eurotiomycetes</taxon>
        <taxon>Eurotiomycetidae</taxon>
        <taxon>Onygenales</taxon>
        <taxon>Arthrodermataceae</taxon>
        <taxon>Microsporum</taxon>
    </lineage>
</organism>
<reference key="1">
    <citation type="journal article" date="2012" name="MBio">
        <title>Comparative genome analysis of Trichophyton rubrum and related dermatophytes reveals candidate genes involved in infection.</title>
        <authorList>
            <person name="Martinez D.A."/>
            <person name="Oliver B.G."/>
            <person name="Graeser Y."/>
            <person name="Goldberg J.M."/>
            <person name="Li W."/>
            <person name="Martinez-Rossi N.M."/>
            <person name="Monod M."/>
            <person name="Shelest E."/>
            <person name="Barton R.C."/>
            <person name="Birch E."/>
            <person name="Brakhage A.A."/>
            <person name="Chen Z."/>
            <person name="Gurr S.J."/>
            <person name="Heiman D."/>
            <person name="Heitman J."/>
            <person name="Kosti I."/>
            <person name="Rossi A."/>
            <person name="Saif S."/>
            <person name="Samalova M."/>
            <person name="Saunders C.W."/>
            <person name="Shea T."/>
            <person name="Summerbell R.C."/>
            <person name="Xu J."/>
            <person name="Young S."/>
            <person name="Zeng Q."/>
            <person name="Birren B.W."/>
            <person name="Cuomo C.A."/>
            <person name="White T.C."/>
        </authorList>
    </citation>
    <scope>NUCLEOTIDE SEQUENCE [LARGE SCALE GENOMIC DNA]</scope>
    <source>
        <strain>ATCC MYA-4605 / CBS 113480</strain>
    </source>
</reference>
<reference key="2">
    <citation type="journal article" date="2012" name="Microbiology">
        <title>Genome mining reveals the presence of a conserved gene cluster for the biosynthesis of ergot alkaloid precursors in the fungal family Arthrodermataceae.</title>
        <authorList>
            <person name="Wallwey C."/>
            <person name="Heddergott C."/>
            <person name="Xie X."/>
            <person name="Brakhage A.A."/>
            <person name="Li S.M."/>
        </authorList>
    </citation>
    <scope>FUNCTION</scope>
</reference>
<feature type="signal peptide" evidence="4">
    <location>
        <begin position="1"/>
        <end position="20"/>
    </location>
</feature>
<feature type="chain" id="PRO_0000439129" description="Chanoclavine-I dehydrogenase easD">
    <location>
        <begin position="21"/>
        <end position="264"/>
    </location>
</feature>
<feature type="active site" description="Proton donor" evidence="3">
    <location>
        <position position="169"/>
    </location>
</feature>
<feature type="active site" description="Lowers pKa of active site Tyr" evidence="3">
    <location>
        <position position="173"/>
    </location>
</feature>
<feature type="binding site" evidence="2">
    <location>
        <position position="18"/>
    </location>
    <ligand>
        <name>NADP(+)</name>
        <dbReference type="ChEBI" id="CHEBI:58349"/>
    </ligand>
</feature>
<feature type="binding site" evidence="2">
    <location>
        <position position="66"/>
    </location>
    <ligand>
        <name>NADP(+)</name>
        <dbReference type="ChEBI" id="CHEBI:58349"/>
    </ligand>
</feature>
<feature type="binding site" evidence="2">
    <location>
        <position position="132"/>
    </location>
    <ligand>
        <name>NADP(+)</name>
        <dbReference type="ChEBI" id="CHEBI:58349"/>
    </ligand>
</feature>
<feature type="binding site" evidence="3">
    <location>
        <position position="169"/>
    </location>
    <ligand>
        <name>NADP(+)</name>
        <dbReference type="ChEBI" id="CHEBI:58349"/>
    </ligand>
</feature>
<feature type="binding site" evidence="3">
    <location>
        <position position="173"/>
    </location>
    <ligand>
        <name>NADP(+)</name>
        <dbReference type="ChEBI" id="CHEBI:58349"/>
    </ligand>
</feature>
<feature type="binding site" evidence="2">
    <location>
        <position position="204"/>
    </location>
    <ligand>
        <name>NADP(+)</name>
        <dbReference type="ChEBI" id="CHEBI:58349"/>
    </ligand>
</feature>
<dbReference type="EC" id="1.1.1.332" evidence="8"/>
<dbReference type="EMBL" id="DS995705">
    <property type="protein sequence ID" value="EEQ33233.1"/>
    <property type="molecule type" value="Genomic_DNA"/>
</dbReference>
<dbReference type="RefSeq" id="XP_002846183.1">
    <property type="nucleotide sequence ID" value="XM_002846137.1"/>
</dbReference>
<dbReference type="SMR" id="C5FTN0"/>
<dbReference type="STRING" id="554155.C5FTN0"/>
<dbReference type="GeneID" id="9227065"/>
<dbReference type="VEuPathDB" id="FungiDB:MCYG_06052"/>
<dbReference type="eggNOG" id="KOG4169">
    <property type="taxonomic scope" value="Eukaryota"/>
</dbReference>
<dbReference type="HOGENOM" id="CLU_010194_1_0_1"/>
<dbReference type="OMA" id="KAGCAYF"/>
<dbReference type="OrthoDB" id="1669814at2759"/>
<dbReference type="UniPathway" id="UPA00327"/>
<dbReference type="Proteomes" id="UP000002035">
    <property type="component" value="Unassembled WGS sequence"/>
</dbReference>
<dbReference type="GO" id="GO:0016491">
    <property type="term" value="F:oxidoreductase activity"/>
    <property type="evidence" value="ECO:0007669"/>
    <property type="project" value="UniProtKB-KW"/>
</dbReference>
<dbReference type="GO" id="GO:0035835">
    <property type="term" value="P:indole alkaloid biosynthetic process"/>
    <property type="evidence" value="ECO:0007669"/>
    <property type="project" value="UniProtKB-UniPathway"/>
</dbReference>
<dbReference type="CDD" id="cd05233">
    <property type="entry name" value="SDR_c"/>
    <property type="match status" value="1"/>
</dbReference>
<dbReference type="FunFam" id="3.40.50.720:FF:000979">
    <property type="entry name" value="Chanoclavine-I dehydrogenase easD"/>
    <property type="match status" value="1"/>
</dbReference>
<dbReference type="Gene3D" id="3.40.50.720">
    <property type="entry name" value="NAD(P)-binding Rossmann-like Domain"/>
    <property type="match status" value="1"/>
</dbReference>
<dbReference type="InterPro" id="IPR036291">
    <property type="entry name" value="NAD(P)-bd_dom_sf"/>
</dbReference>
<dbReference type="InterPro" id="IPR002347">
    <property type="entry name" value="SDR_fam"/>
</dbReference>
<dbReference type="PANTHER" id="PTHR24321">
    <property type="entry name" value="DEHYDROGENASES, SHORT CHAIN"/>
    <property type="match status" value="1"/>
</dbReference>
<dbReference type="PANTHER" id="PTHR24321:SF8">
    <property type="entry name" value="ESTRADIOL 17-BETA-DEHYDROGENASE 8-RELATED"/>
    <property type="match status" value="1"/>
</dbReference>
<dbReference type="Pfam" id="PF13561">
    <property type="entry name" value="adh_short_C2"/>
    <property type="match status" value="1"/>
</dbReference>
<dbReference type="PRINTS" id="PR00081">
    <property type="entry name" value="GDHRDH"/>
</dbReference>
<dbReference type="SUPFAM" id="SSF51735">
    <property type="entry name" value="NAD(P)-binding Rossmann-fold domains"/>
    <property type="match status" value="1"/>
</dbReference>
<keyword id="KW-0017">Alkaloid metabolism</keyword>
<keyword id="KW-0521">NADP</keyword>
<keyword id="KW-0560">Oxidoreductase</keyword>
<keyword id="KW-1185">Reference proteome</keyword>
<keyword id="KW-0732">Signal</keyword>